<reference key="1">
    <citation type="journal article" date="1997" name="Nature">
        <title>The complete genome sequence of the hyperthermophilic, sulphate-reducing archaeon Archaeoglobus fulgidus.</title>
        <authorList>
            <person name="Klenk H.-P."/>
            <person name="Clayton R.A."/>
            <person name="Tomb J.-F."/>
            <person name="White O."/>
            <person name="Nelson K.E."/>
            <person name="Ketchum K.A."/>
            <person name="Dodson R.J."/>
            <person name="Gwinn M.L."/>
            <person name="Hickey E.K."/>
            <person name="Peterson J.D."/>
            <person name="Richardson D.L."/>
            <person name="Kerlavage A.R."/>
            <person name="Graham D.E."/>
            <person name="Kyrpides N.C."/>
            <person name="Fleischmann R.D."/>
            <person name="Quackenbush J."/>
            <person name="Lee N.H."/>
            <person name="Sutton G.G."/>
            <person name="Gill S.R."/>
            <person name="Kirkness E.F."/>
            <person name="Dougherty B.A."/>
            <person name="McKenney K."/>
            <person name="Adams M.D."/>
            <person name="Loftus B.J."/>
            <person name="Peterson S.N."/>
            <person name="Reich C.I."/>
            <person name="McNeil L.K."/>
            <person name="Badger J.H."/>
            <person name="Glodek A."/>
            <person name="Zhou L."/>
            <person name="Overbeek R."/>
            <person name="Gocayne J.D."/>
            <person name="Weidman J.F."/>
            <person name="McDonald L.A."/>
            <person name="Utterback T.R."/>
            <person name="Cotton M.D."/>
            <person name="Spriggs T."/>
            <person name="Artiach P."/>
            <person name="Kaine B.P."/>
            <person name="Sykes S.M."/>
            <person name="Sadow P.W."/>
            <person name="D'Andrea K.P."/>
            <person name="Bowman C."/>
            <person name="Fujii C."/>
            <person name="Garland S.A."/>
            <person name="Mason T.M."/>
            <person name="Olsen G.J."/>
            <person name="Fraser C.M."/>
            <person name="Smith H.O."/>
            <person name="Woese C.R."/>
            <person name="Venter J.C."/>
        </authorList>
    </citation>
    <scope>NUCLEOTIDE SEQUENCE [LARGE SCALE GENOMIC DNA]</scope>
    <source>
        <strain>ATCC 49558 / DSM 4304 / JCM 9628 / NBRC 100126 / VC-16</strain>
    </source>
</reference>
<organism>
    <name type="scientific">Archaeoglobus fulgidus (strain ATCC 49558 / DSM 4304 / JCM 9628 / NBRC 100126 / VC-16)</name>
    <dbReference type="NCBI Taxonomy" id="224325"/>
    <lineage>
        <taxon>Archaea</taxon>
        <taxon>Methanobacteriati</taxon>
        <taxon>Methanobacteriota</taxon>
        <taxon>Archaeoglobi</taxon>
        <taxon>Archaeoglobales</taxon>
        <taxon>Archaeoglobaceae</taxon>
        <taxon>Archaeoglobus</taxon>
    </lineage>
</organism>
<name>RPO12_ARCFU</name>
<protein>
    <recommendedName>
        <fullName evidence="1">DNA-directed RNA polymerase subunit Rpo12</fullName>
        <ecNumber evidence="1">2.7.7.6</ecNumber>
    </recommendedName>
    <alternativeName>
        <fullName evidence="1">DNA-directed RNA polymerase subunit P</fullName>
    </alternativeName>
</protein>
<dbReference type="EC" id="2.7.7.6" evidence="1"/>
<dbReference type="EMBL" id="AE000782">
    <property type="protein sequence ID" value="AAB91179.1"/>
    <property type="molecule type" value="Genomic_DNA"/>
</dbReference>
<dbReference type="PIR" id="H69256">
    <property type="entry name" value="H69256"/>
</dbReference>
<dbReference type="RefSeq" id="WP_010877570.1">
    <property type="nucleotide sequence ID" value="NC_000917.1"/>
</dbReference>
<dbReference type="SMR" id="O30180"/>
<dbReference type="STRING" id="224325.AF_0056"/>
<dbReference type="PaxDb" id="224325-AF_0056"/>
<dbReference type="EnsemblBacteria" id="AAB91179">
    <property type="protein sequence ID" value="AAB91179"/>
    <property type="gene ID" value="AF_0056"/>
</dbReference>
<dbReference type="KEGG" id="afu:AF_0056"/>
<dbReference type="eggNOG" id="arCOG04341">
    <property type="taxonomic scope" value="Archaea"/>
</dbReference>
<dbReference type="HOGENOM" id="CLU_179456_2_1_2"/>
<dbReference type="OrthoDB" id="129238at2157"/>
<dbReference type="Proteomes" id="UP000002199">
    <property type="component" value="Chromosome"/>
</dbReference>
<dbReference type="GO" id="GO:0005737">
    <property type="term" value="C:cytoplasm"/>
    <property type="evidence" value="ECO:0007669"/>
    <property type="project" value="UniProtKB-SubCell"/>
</dbReference>
<dbReference type="GO" id="GO:0000428">
    <property type="term" value="C:DNA-directed RNA polymerase complex"/>
    <property type="evidence" value="ECO:0007669"/>
    <property type="project" value="UniProtKB-KW"/>
</dbReference>
<dbReference type="GO" id="GO:0003677">
    <property type="term" value="F:DNA binding"/>
    <property type="evidence" value="ECO:0007669"/>
    <property type="project" value="InterPro"/>
</dbReference>
<dbReference type="GO" id="GO:0003899">
    <property type="term" value="F:DNA-directed RNA polymerase activity"/>
    <property type="evidence" value="ECO:0007669"/>
    <property type="project" value="UniProtKB-UniRule"/>
</dbReference>
<dbReference type="GO" id="GO:0008270">
    <property type="term" value="F:zinc ion binding"/>
    <property type="evidence" value="ECO:0007669"/>
    <property type="project" value="UniProtKB-UniRule"/>
</dbReference>
<dbReference type="GO" id="GO:0006351">
    <property type="term" value="P:DNA-templated transcription"/>
    <property type="evidence" value="ECO:0007669"/>
    <property type="project" value="UniProtKB-UniRule"/>
</dbReference>
<dbReference type="Gene3D" id="2.20.28.30">
    <property type="entry name" value="RNA polymerase ii, chain L"/>
    <property type="match status" value="1"/>
</dbReference>
<dbReference type="HAMAP" id="MF_00615">
    <property type="entry name" value="RNApol_arch_Rpo12"/>
    <property type="match status" value="1"/>
</dbReference>
<dbReference type="InterPro" id="IPR006591">
    <property type="entry name" value="RNAP_P/RPABC4"/>
</dbReference>
<dbReference type="InterPro" id="IPR029040">
    <property type="entry name" value="RPABC4/Spt4"/>
</dbReference>
<dbReference type="InterPro" id="IPR023464">
    <property type="entry name" value="Rpo12"/>
</dbReference>
<dbReference type="Pfam" id="PF03604">
    <property type="entry name" value="Zn_ribbon_RPAB4"/>
    <property type="match status" value="1"/>
</dbReference>
<dbReference type="SMART" id="SM00659">
    <property type="entry name" value="RPOLCX"/>
    <property type="match status" value="1"/>
</dbReference>
<dbReference type="SUPFAM" id="SSF63393">
    <property type="entry name" value="RNA polymerase subunits"/>
    <property type="match status" value="1"/>
</dbReference>
<proteinExistence type="inferred from homology"/>
<evidence type="ECO:0000255" key="1">
    <source>
        <dbReference type="HAMAP-Rule" id="MF_00615"/>
    </source>
</evidence>
<sequence length="46" mass="5063">MSYVCLICGAEVDIDTEKSLVQCTNCGGRILIKPRPLAKKKRVKAI</sequence>
<gene>
    <name evidence="1" type="primary">rpo12</name>
    <name evidence="1" type="synonym">rpoP</name>
    <name type="ordered locus">AF_0056</name>
</gene>
<accession>O30180</accession>
<keyword id="KW-0963">Cytoplasm</keyword>
<keyword id="KW-0240">DNA-directed RNA polymerase</keyword>
<keyword id="KW-0479">Metal-binding</keyword>
<keyword id="KW-0548">Nucleotidyltransferase</keyword>
<keyword id="KW-1185">Reference proteome</keyword>
<keyword id="KW-0804">Transcription</keyword>
<keyword id="KW-0808">Transferase</keyword>
<keyword id="KW-0862">Zinc</keyword>
<comment type="function">
    <text evidence="1">DNA-dependent RNA polymerase (RNAP) catalyzes the transcription of DNA into RNA using the four ribonucleoside triphosphates as substrates.</text>
</comment>
<comment type="catalytic activity">
    <reaction evidence="1">
        <text>RNA(n) + a ribonucleoside 5'-triphosphate = RNA(n+1) + diphosphate</text>
        <dbReference type="Rhea" id="RHEA:21248"/>
        <dbReference type="Rhea" id="RHEA-COMP:14527"/>
        <dbReference type="Rhea" id="RHEA-COMP:17342"/>
        <dbReference type="ChEBI" id="CHEBI:33019"/>
        <dbReference type="ChEBI" id="CHEBI:61557"/>
        <dbReference type="ChEBI" id="CHEBI:140395"/>
        <dbReference type="EC" id="2.7.7.6"/>
    </reaction>
</comment>
<comment type="cofactor">
    <cofactor evidence="1">
        <name>Zn(2+)</name>
        <dbReference type="ChEBI" id="CHEBI:29105"/>
    </cofactor>
    <text evidence="1">Binds 1 zinc ion.</text>
</comment>
<comment type="subunit">
    <text evidence="1">Part of the RNA polymerase complex.</text>
</comment>
<comment type="subcellular location">
    <subcellularLocation>
        <location evidence="1">Cytoplasm</location>
    </subcellularLocation>
</comment>
<comment type="similarity">
    <text evidence="1">Belongs to the archaeal Rpo12/eukaryotic RPC10 RNA polymerase subunit family.</text>
</comment>
<feature type="chain" id="PRO_0000159754" description="DNA-directed RNA polymerase subunit Rpo12">
    <location>
        <begin position="1"/>
        <end position="46"/>
    </location>
</feature>
<feature type="binding site" evidence="1">
    <location>
        <position position="8"/>
    </location>
    <ligand>
        <name>Zn(2+)</name>
        <dbReference type="ChEBI" id="CHEBI:29105"/>
    </ligand>
</feature>
<feature type="binding site" evidence="1">
    <location>
        <position position="23"/>
    </location>
    <ligand>
        <name>Zn(2+)</name>
        <dbReference type="ChEBI" id="CHEBI:29105"/>
    </ligand>
</feature>
<feature type="binding site" evidence="1">
    <location>
        <position position="26"/>
    </location>
    <ligand>
        <name>Zn(2+)</name>
        <dbReference type="ChEBI" id="CHEBI:29105"/>
    </ligand>
</feature>